<evidence type="ECO:0000255" key="1">
    <source>
        <dbReference type="HAMAP-Rule" id="MF_01393"/>
    </source>
</evidence>
<proteinExistence type="inferred from homology"/>
<feature type="chain" id="PRO_0000362602" description="ATP synthase subunit a, chloroplastic">
    <location>
        <begin position="1"/>
        <end position="246"/>
    </location>
</feature>
<feature type="transmembrane region" description="Helical" evidence="1">
    <location>
        <begin position="35"/>
        <end position="55"/>
    </location>
</feature>
<feature type="transmembrane region" description="Helical" evidence="1">
    <location>
        <begin position="94"/>
        <end position="114"/>
    </location>
</feature>
<feature type="transmembrane region" description="Helical" evidence="1">
    <location>
        <begin position="132"/>
        <end position="152"/>
    </location>
</feature>
<feature type="transmembrane region" description="Helical" evidence="1">
    <location>
        <begin position="198"/>
        <end position="218"/>
    </location>
</feature>
<feature type="transmembrane region" description="Helical" evidence="1">
    <location>
        <begin position="219"/>
        <end position="239"/>
    </location>
</feature>
<protein>
    <recommendedName>
        <fullName evidence="1">ATP synthase subunit a, chloroplastic</fullName>
    </recommendedName>
    <alternativeName>
        <fullName evidence="1">ATP synthase F0 sector subunit a</fullName>
    </alternativeName>
    <alternativeName>
        <fullName evidence="1">F-ATPase subunit IV</fullName>
    </alternativeName>
</protein>
<accession>Q06SI1</accession>
<sequence>MLNLQNVIINPLFEISEVSVGEHYYWEIAGYEVHGQVLLTSWFVLGTVILFGLIANKDLKPLPEGLQNFSELVTEFIRDLAKTQVGEEEYLKWVPFIGTIFIFVLVSNWSGALLPWRLIEIPNGELAAPTNDINTTVALALLTSISYFYAGIRKKGLGYFKRYVQPAVFLLPINVLEDFSKPLSLSFRLFGNILADELVVGVLVALVPLIVPIPVMLLGVFTSAIQALVFATLAGAYIGESVEDHH</sequence>
<keyword id="KW-0066">ATP synthesis</keyword>
<keyword id="KW-0138">CF(0)</keyword>
<keyword id="KW-0150">Chloroplast</keyword>
<keyword id="KW-0375">Hydrogen ion transport</keyword>
<keyword id="KW-0406">Ion transport</keyword>
<keyword id="KW-0472">Membrane</keyword>
<keyword id="KW-0934">Plastid</keyword>
<keyword id="KW-0793">Thylakoid</keyword>
<keyword id="KW-0812">Transmembrane</keyword>
<keyword id="KW-1133">Transmembrane helix</keyword>
<keyword id="KW-0813">Transport</keyword>
<geneLocation type="chloroplast"/>
<name>ATPI_STIHE</name>
<organism>
    <name type="scientific">Stigeoclonium helveticum</name>
    <name type="common">Green alga</name>
    <dbReference type="NCBI Taxonomy" id="55999"/>
    <lineage>
        <taxon>Eukaryota</taxon>
        <taxon>Viridiplantae</taxon>
        <taxon>Chlorophyta</taxon>
        <taxon>core chlorophytes</taxon>
        <taxon>Chlorophyceae</taxon>
        <taxon>OCC clade</taxon>
        <taxon>Chaetophorales</taxon>
        <taxon>Chaetophoraceae</taxon>
        <taxon>Stigeoclonium</taxon>
    </lineage>
</organism>
<reference key="1">
    <citation type="journal article" date="2006" name="Mol. Genet. Genomics">
        <title>Distinctive architecture of the chloroplast genome in the chlorophycean green alga Stigeoclonium helveticum.</title>
        <authorList>
            <person name="Belanger A.-S."/>
            <person name="Brouard J.-S."/>
            <person name="Charlebois P."/>
            <person name="Otis C."/>
            <person name="Lemieux C."/>
            <person name="Turmel M."/>
        </authorList>
    </citation>
    <scope>NUCLEOTIDE SEQUENCE [LARGE SCALE GENOMIC DNA]</scope>
    <source>
        <strain>UTEX 441</strain>
    </source>
</reference>
<dbReference type="EMBL" id="DQ630521">
    <property type="protein sequence ID" value="ABF60151.1"/>
    <property type="molecule type" value="Genomic_DNA"/>
</dbReference>
<dbReference type="RefSeq" id="YP_764385.1">
    <property type="nucleotide sequence ID" value="NC_008372.1"/>
</dbReference>
<dbReference type="SMR" id="Q06SI1"/>
<dbReference type="GeneID" id="4308394"/>
<dbReference type="GO" id="GO:0009535">
    <property type="term" value="C:chloroplast thylakoid membrane"/>
    <property type="evidence" value="ECO:0007669"/>
    <property type="project" value="UniProtKB-SubCell"/>
</dbReference>
<dbReference type="GO" id="GO:0005886">
    <property type="term" value="C:plasma membrane"/>
    <property type="evidence" value="ECO:0007669"/>
    <property type="project" value="UniProtKB-UniRule"/>
</dbReference>
<dbReference type="GO" id="GO:0045259">
    <property type="term" value="C:proton-transporting ATP synthase complex"/>
    <property type="evidence" value="ECO:0007669"/>
    <property type="project" value="UniProtKB-KW"/>
</dbReference>
<dbReference type="GO" id="GO:0046933">
    <property type="term" value="F:proton-transporting ATP synthase activity, rotational mechanism"/>
    <property type="evidence" value="ECO:0007669"/>
    <property type="project" value="UniProtKB-UniRule"/>
</dbReference>
<dbReference type="CDD" id="cd00310">
    <property type="entry name" value="ATP-synt_Fo_a_6"/>
    <property type="match status" value="1"/>
</dbReference>
<dbReference type="FunFam" id="1.20.120.220:FF:000001">
    <property type="entry name" value="ATP synthase subunit a, chloroplastic"/>
    <property type="match status" value="1"/>
</dbReference>
<dbReference type="Gene3D" id="1.20.120.220">
    <property type="entry name" value="ATP synthase, F0 complex, subunit A"/>
    <property type="match status" value="1"/>
</dbReference>
<dbReference type="HAMAP" id="MF_01393">
    <property type="entry name" value="ATP_synth_a_bact"/>
    <property type="match status" value="1"/>
</dbReference>
<dbReference type="InterPro" id="IPR045082">
    <property type="entry name" value="ATP_syn_F0_a_bact/chloroplast"/>
</dbReference>
<dbReference type="InterPro" id="IPR000568">
    <property type="entry name" value="ATP_synth_F0_asu"/>
</dbReference>
<dbReference type="InterPro" id="IPR023011">
    <property type="entry name" value="ATP_synth_F0_asu_AS"/>
</dbReference>
<dbReference type="InterPro" id="IPR035908">
    <property type="entry name" value="F0_ATP_A_sf"/>
</dbReference>
<dbReference type="NCBIfam" id="TIGR01131">
    <property type="entry name" value="ATP_synt_6_or_A"/>
    <property type="match status" value="1"/>
</dbReference>
<dbReference type="PANTHER" id="PTHR42823">
    <property type="entry name" value="ATP SYNTHASE SUBUNIT A, CHLOROPLASTIC"/>
    <property type="match status" value="1"/>
</dbReference>
<dbReference type="PANTHER" id="PTHR42823:SF3">
    <property type="entry name" value="ATP SYNTHASE SUBUNIT A, CHLOROPLASTIC"/>
    <property type="match status" value="1"/>
</dbReference>
<dbReference type="Pfam" id="PF00119">
    <property type="entry name" value="ATP-synt_A"/>
    <property type="match status" value="1"/>
</dbReference>
<dbReference type="PRINTS" id="PR00123">
    <property type="entry name" value="ATPASEA"/>
</dbReference>
<dbReference type="SUPFAM" id="SSF81336">
    <property type="entry name" value="F1F0 ATP synthase subunit A"/>
    <property type="match status" value="1"/>
</dbReference>
<dbReference type="PROSITE" id="PS00449">
    <property type="entry name" value="ATPASE_A"/>
    <property type="match status" value="1"/>
</dbReference>
<comment type="function">
    <text evidence="1">Key component of the proton channel; it plays a direct role in the translocation of protons across the membrane.</text>
</comment>
<comment type="subunit">
    <text evidence="1">F-type ATPases have 2 components, CF(1) - the catalytic core - and CF(0) - the membrane proton channel. CF(1) has five subunits: alpha(3), beta(3), gamma(1), delta(1), epsilon(1). CF(0) has four main subunits: a, b, b' and c.</text>
</comment>
<comment type="subcellular location">
    <subcellularLocation>
        <location evidence="1">Plastid</location>
        <location evidence="1">Chloroplast thylakoid membrane</location>
        <topology evidence="1">Multi-pass membrane protein</topology>
    </subcellularLocation>
</comment>
<comment type="similarity">
    <text evidence="1">Belongs to the ATPase A chain family.</text>
</comment>
<gene>
    <name evidence="1" type="primary">atpI</name>
</gene>